<sequence>MSLPTTSSPLTNDQEFAKPVRNGKIFENPKSFTNWGGRPGLTNIFKLVLRETSHENLPSDKKVLDSTLPVHNITADDFHSESGLFATWLGHATVLVDLEGVKFVTDPVWADRASFTSFAGPKRYRPPPMKLEDLPDLDFAVVSHDHYDHLDADAVKRITNLNPQIKWFVPLGLKKWMKNQGIGADGSNTVTELNWGESSEFVKNGKTITIWCLPAQHSGQRGLSDHNHRLWSGWAVIGENRRFYFPGDTGFCDVEFKKIGEKLGPFDLAAIPIGAYEPRWFMKSHHINPDEAVEVHKLVRARNSIGIHWGTYPMGTTEYYLEPRDKLKELMDAREDLKDTSFVTVDMGEIWEASDR</sequence>
<organism>
    <name type="scientific">Caenorhabditis elegans</name>
    <dbReference type="NCBI Taxonomy" id="6239"/>
    <lineage>
        <taxon>Eukaryota</taxon>
        <taxon>Metazoa</taxon>
        <taxon>Ecdysozoa</taxon>
        <taxon>Nematoda</taxon>
        <taxon>Chromadorea</taxon>
        <taxon>Rhabditida</taxon>
        <taxon>Rhabditina</taxon>
        <taxon>Rhabditomorpha</taxon>
        <taxon>Rhabditoidea</taxon>
        <taxon>Rhabditidae</taxon>
        <taxon>Peloderinae</taxon>
        <taxon>Caenorhabditis</taxon>
    </lineage>
</organism>
<accession>Q965X7</accession>
<comment type="function">
    <text evidence="3 4">D-type phospholipase that hydrolyzes N-acyl-phosphatidylethanolamines (NAPEs) to produce bioactive N-acylethanolamines/fatty acid ethanolamides (NAEs/FAEs) and phosphatidic acid (PubMed:25423491). NAEs are bioactive lipids that are involved in diverse physiological processes such as growth and lifespan (PubMed:21562563, PubMed:25423491).</text>
</comment>
<comment type="catalytic activity">
    <reaction evidence="4">
        <text>an N-acyl-1,2-diacyl-sn-glycero-3-phosphoethanolamine + H2O = an N-acylethanolamine + a 1,2-diacyl-sn-glycero-3-phosphate + H(+)</text>
        <dbReference type="Rhea" id="RHEA:33159"/>
        <dbReference type="ChEBI" id="CHEBI:15377"/>
        <dbReference type="ChEBI" id="CHEBI:15378"/>
        <dbReference type="ChEBI" id="CHEBI:52640"/>
        <dbReference type="ChEBI" id="CHEBI:58608"/>
        <dbReference type="ChEBI" id="CHEBI:62537"/>
        <dbReference type="EC" id="3.1.4.54"/>
    </reaction>
    <physiologicalReaction direction="left-to-right" evidence="7">
        <dbReference type="Rhea" id="RHEA:33160"/>
    </physiologicalReaction>
</comment>
<comment type="catalytic activity">
    <reaction evidence="4">
        <text>1,2-dihexadecanoyl-sn-glycero-3-phospho-(N-hexadecanoyl)-ethanolamine + H2O = 1,2-dihexadecanoyl-sn-glycero-3-phosphate + N-hexadecanoylethanolamine + H(+)</text>
        <dbReference type="Rhea" id="RHEA:51408"/>
        <dbReference type="ChEBI" id="CHEBI:15377"/>
        <dbReference type="ChEBI" id="CHEBI:15378"/>
        <dbReference type="ChEBI" id="CHEBI:71464"/>
        <dbReference type="ChEBI" id="CHEBI:72859"/>
        <dbReference type="ChEBI" id="CHEBI:134072"/>
    </reaction>
    <physiologicalReaction direction="left-to-right" evidence="7">
        <dbReference type="Rhea" id="RHEA:51409"/>
    </physiologicalReaction>
</comment>
<comment type="catalytic activity">
    <reaction evidence="4">
        <text>N-(5Z,8Z,11Z,14Z-eicosatetraenoyl)-1,2-di-(9Z-octadecenoyl)-sn-glycero-3-phosphoethanolamine + H2O = N-(5Z,8Z,11Z,14Z-eicosatetraenoyl)-ethanolamine + 1,2-di-(9Z-octadecenoyl)-sn-glycero-3-phosphate + H(+)</text>
        <dbReference type="Rhea" id="RHEA:45528"/>
        <dbReference type="ChEBI" id="CHEBI:2700"/>
        <dbReference type="ChEBI" id="CHEBI:15377"/>
        <dbReference type="ChEBI" id="CHEBI:15378"/>
        <dbReference type="ChEBI" id="CHEBI:74546"/>
        <dbReference type="ChEBI" id="CHEBI:85277"/>
    </reaction>
    <physiologicalReaction direction="left-to-right" evidence="7">
        <dbReference type="Rhea" id="RHEA:45529"/>
    </physiologicalReaction>
</comment>
<comment type="cofactor">
    <cofactor evidence="1">
        <name>Zn(2+)</name>
        <dbReference type="ChEBI" id="CHEBI:29105"/>
    </cofactor>
    <text evidence="1">Binds 2 zinc divalent cations per subunit.</text>
</comment>
<comment type="tissue specificity">
    <text evidence="3 4">Expressed in interneurons that are in close proximity to the primary sensory neurons (PubMed:21562563). Predominantly expressed in the pharynx but can also be found in cell bodies of the dorsal and ventral nerve cords (PubMed:25423491).</text>
</comment>
<comment type="disruption phenotype">
    <text evidence="4">No strong phenotype in the nape-1 deletion mutant, however its overexpression alters growth and lifespan when grown at 25 degrees Celsius compared to 15 degrees Celsius.</text>
</comment>
<comment type="similarity">
    <text evidence="6">Belongs to the NAPE-PLD family.</text>
</comment>
<dbReference type="EC" id="3.1.4.54" evidence="4"/>
<dbReference type="EMBL" id="BX284604">
    <property type="protein sequence ID" value="CCD74042.1"/>
    <property type="molecule type" value="Genomic_DNA"/>
</dbReference>
<dbReference type="RefSeq" id="NP_500408.1">
    <property type="nucleotide sequence ID" value="NM_068007.5"/>
</dbReference>
<dbReference type="SMR" id="Q965X7"/>
<dbReference type="FunCoup" id="Q965X7">
    <property type="interactions" value="1261"/>
</dbReference>
<dbReference type="STRING" id="6239.Y37E11AR.4.1"/>
<dbReference type="SwissLipids" id="SLP:000001663"/>
<dbReference type="PaxDb" id="6239-Y37E11AR.4"/>
<dbReference type="PeptideAtlas" id="Q965X7"/>
<dbReference type="EnsemblMetazoa" id="Y37E11AR.4.1">
    <property type="protein sequence ID" value="Y37E11AR.4.1"/>
    <property type="gene ID" value="WBGene00021371"/>
</dbReference>
<dbReference type="GeneID" id="177137"/>
<dbReference type="KEGG" id="cel:CELE_Y37E11AR.4"/>
<dbReference type="UCSC" id="Y37E11AR.4">
    <property type="organism name" value="c. elegans"/>
</dbReference>
<dbReference type="AGR" id="WB:WBGene00021371"/>
<dbReference type="CTD" id="177137"/>
<dbReference type="WormBase" id="Y37E11AR.4">
    <property type="protein sequence ID" value="CE21545"/>
    <property type="gene ID" value="WBGene00021371"/>
    <property type="gene designation" value="nape-1"/>
</dbReference>
<dbReference type="eggNOG" id="KOG3798">
    <property type="taxonomic scope" value="Eukaryota"/>
</dbReference>
<dbReference type="GeneTree" id="ENSGT00940000173847"/>
<dbReference type="HOGENOM" id="CLU_020884_1_1_1"/>
<dbReference type="InParanoid" id="Q965X7"/>
<dbReference type="OMA" id="MNGINIL"/>
<dbReference type="OrthoDB" id="332863at2759"/>
<dbReference type="PhylomeDB" id="Q965X7"/>
<dbReference type="PRO" id="PR:Q965X7"/>
<dbReference type="Proteomes" id="UP000001940">
    <property type="component" value="Chromosome IV"/>
</dbReference>
<dbReference type="Bgee" id="WBGene00021371">
    <property type="expression patterns" value="Expressed in larva and 2 other cell types or tissues"/>
</dbReference>
<dbReference type="GO" id="GO:0005737">
    <property type="term" value="C:cytoplasm"/>
    <property type="evidence" value="ECO:0000318"/>
    <property type="project" value="GO_Central"/>
</dbReference>
<dbReference type="GO" id="GO:0043005">
    <property type="term" value="C:neuron projection"/>
    <property type="evidence" value="ECO:0000318"/>
    <property type="project" value="GO_Central"/>
</dbReference>
<dbReference type="GO" id="GO:0043025">
    <property type="term" value="C:neuronal cell body"/>
    <property type="evidence" value="ECO:0000314"/>
    <property type="project" value="WormBase"/>
</dbReference>
<dbReference type="GO" id="GO:0070290">
    <property type="term" value="F:N-acylphosphatidylethanolamine-specific phospholipase D activity"/>
    <property type="evidence" value="ECO:0000314"/>
    <property type="project" value="WormBase"/>
</dbReference>
<dbReference type="GO" id="GO:0008270">
    <property type="term" value="F:zinc ion binding"/>
    <property type="evidence" value="ECO:0007669"/>
    <property type="project" value="InterPro"/>
</dbReference>
<dbReference type="GO" id="GO:0070291">
    <property type="term" value="P:N-acylethanolamine metabolic process"/>
    <property type="evidence" value="ECO:0000314"/>
    <property type="project" value="WormBase"/>
</dbReference>
<dbReference type="GO" id="GO:0070292">
    <property type="term" value="P:N-acylphosphatidylethanolamine metabolic process"/>
    <property type="evidence" value="ECO:0000318"/>
    <property type="project" value="GO_Central"/>
</dbReference>
<dbReference type="GO" id="GO:0009395">
    <property type="term" value="P:phospholipid catabolic process"/>
    <property type="evidence" value="ECO:0007669"/>
    <property type="project" value="UniProtKB-KW"/>
</dbReference>
<dbReference type="FunFam" id="3.60.15.10:FF:000136">
    <property type="entry name" value="N-Acyl Phosphatidyl Ethanolamine specific phospholipase D (NAPE-PLD) homolog"/>
    <property type="match status" value="1"/>
</dbReference>
<dbReference type="Gene3D" id="3.60.15.10">
    <property type="entry name" value="Ribonuclease Z/Hydroxyacylglutathione hydrolase-like"/>
    <property type="match status" value="1"/>
</dbReference>
<dbReference type="InterPro" id="IPR001279">
    <property type="entry name" value="Metallo-B-lactamas"/>
</dbReference>
<dbReference type="InterPro" id="IPR024884">
    <property type="entry name" value="NAPE-PLD"/>
</dbReference>
<dbReference type="InterPro" id="IPR036866">
    <property type="entry name" value="RibonucZ/Hydroxyglut_hydro"/>
</dbReference>
<dbReference type="PANTHER" id="PTHR15032">
    <property type="entry name" value="N-ACYL-PHOSPHATIDYLETHANOLAMINE-HYDROLYZING PHOSPHOLIPASE D"/>
    <property type="match status" value="1"/>
</dbReference>
<dbReference type="PANTHER" id="PTHR15032:SF4">
    <property type="entry name" value="N-ACYL-PHOSPHATIDYLETHANOLAMINE-HYDROLYZING PHOSPHOLIPASE D"/>
    <property type="match status" value="1"/>
</dbReference>
<dbReference type="Pfam" id="PF12706">
    <property type="entry name" value="Lactamase_B_2"/>
    <property type="match status" value="1"/>
</dbReference>
<dbReference type="PIRSF" id="PIRSF038896">
    <property type="entry name" value="NAPE-PLD"/>
    <property type="match status" value="1"/>
</dbReference>
<dbReference type="SUPFAM" id="SSF56281">
    <property type="entry name" value="Metallo-hydrolase/oxidoreductase"/>
    <property type="match status" value="1"/>
</dbReference>
<keyword id="KW-0378">Hydrolase</keyword>
<keyword id="KW-0442">Lipid degradation</keyword>
<keyword id="KW-0443">Lipid metabolism</keyword>
<keyword id="KW-0479">Metal-binding</keyword>
<keyword id="KW-0595">Phospholipid degradation</keyword>
<keyword id="KW-1208">Phospholipid metabolism</keyword>
<keyword id="KW-1185">Reference proteome</keyword>
<keyword id="KW-0862">Zinc</keyword>
<evidence type="ECO:0000250" key="1">
    <source>
        <dbReference type="UniProtKB" id="Q6IQ20"/>
    </source>
</evidence>
<evidence type="ECO:0000255" key="2">
    <source>
        <dbReference type="PIRSR" id="PIRSR038896-50"/>
    </source>
</evidence>
<evidence type="ECO:0000269" key="3">
    <source>
    </source>
</evidence>
<evidence type="ECO:0000269" key="4">
    <source>
    </source>
</evidence>
<evidence type="ECO:0000303" key="5">
    <source>
    </source>
</evidence>
<evidence type="ECO:0000305" key="6"/>
<evidence type="ECO:0000305" key="7">
    <source>
    </source>
</evidence>
<evidence type="ECO:0000312" key="8">
    <source>
        <dbReference type="EMBL" id="CCD74042.1"/>
    </source>
</evidence>
<evidence type="ECO:0000312" key="9">
    <source>
        <dbReference type="WormBase" id="Y37E11AR.4"/>
    </source>
</evidence>
<protein>
    <recommendedName>
        <fullName>N-acyl-phosphatidylethanolamine-hydrolyzing phospholipase D 1</fullName>
        <shortName evidence="5">NAPE-1</shortName>
        <ecNumber evidence="4">3.1.4.54</ecNumber>
    </recommendedName>
</protein>
<reference key="1">
    <citation type="journal article" date="1998" name="Science">
        <title>Genome sequence of the nematode C. elegans: a platform for investigating biology.</title>
        <authorList>
            <consortium name="The C. elegans sequencing consortium"/>
        </authorList>
    </citation>
    <scope>NUCLEOTIDE SEQUENCE [LARGE SCALE GENOMIC DNA]</scope>
    <source>
        <strain>Bristol N2</strain>
    </source>
</reference>
<reference key="2">
    <citation type="journal article" date="2011" name="Nature">
        <title>N-acylethanolamine signalling mediates the effect of diet on lifespan in Caenorhabditis elegans.</title>
        <authorList>
            <person name="Lucanic M."/>
            <person name="Held J.M."/>
            <person name="Vantipalli M.C."/>
            <person name="Klang I.M."/>
            <person name="Graham J.B."/>
            <person name="Gibson B.W."/>
            <person name="Lithgow G.J."/>
            <person name="Gill M.S."/>
        </authorList>
    </citation>
    <scope>FUNCTION</scope>
    <scope>TISSUE SPECIFICITY</scope>
</reference>
<reference key="3">
    <citation type="journal article" date="2014" name="PLoS ONE">
        <title>Characterization of N-acyl phosphatidylethanolamine-specific phospholipase-D isoforms in the nematode Caenorhabditis elegans.</title>
        <authorList>
            <person name="Harrison N."/>
            <person name="Lone M.A."/>
            <person name="Kaul T.K."/>
            <person name="Reis Rodrigues P."/>
            <person name="Ogungbe I.V."/>
            <person name="Gill M.S."/>
        </authorList>
    </citation>
    <scope>FUNCTION</scope>
    <scope>CATALYTIC ACTIVITY</scope>
    <scope>TISSUE SPECIFICITY</scope>
    <scope>DISRUPTION PHENOTYPE</scope>
</reference>
<gene>
    <name evidence="8 9" type="primary">nape-1</name>
    <name evidence="9" type="ORF">Y37E11AR.4</name>
</gene>
<proteinExistence type="evidence at protein level"/>
<feature type="chain" id="PRO_0000452742" description="N-acyl-phosphatidylethanolamine-hydrolyzing phospholipase D 1">
    <location>
        <begin position="1"/>
        <end position="356"/>
    </location>
</feature>
<feature type="binding site" evidence="1">
    <location>
        <position position="144"/>
    </location>
    <ligand>
        <name>Zn(2+)</name>
        <dbReference type="ChEBI" id="CHEBI:29105"/>
        <label>1</label>
    </ligand>
</feature>
<feature type="binding site" evidence="1">
    <location>
        <position position="146"/>
    </location>
    <ligand>
        <name>Zn(2+)</name>
        <dbReference type="ChEBI" id="CHEBI:29105"/>
        <label>1</label>
    </ligand>
</feature>
<feature type="binding site" evidence="2">
    <location>
        <position position="147"/>
    </location>
    <ligand>
        <name>an N-acyl-1,2-diacyl-sn-glycero-3-phosphoethanolamine</name>
        <dbReference type="ChEBI" id="CHEBI:62537"/>
    </ligand>
</feature>
<feature type="binding site" evidence="1">
    <location>
        <position position="148"/>
    </location>
    <ligand>
        <name>Zn(2+)</name>
        <dbReference type="ChEBI" id="CHEBI:29105"/>
        <label>2</label>
    </ligand>
</feature>
<feature type="binding site" evidence="1">
    <location>
        <position position="149"/>
    </location>
    <ligand>
        <name>Zn(2+)</name>
        <dbReference type="ChEBI" id="CHEBI:29105"/>
        <label>2</label>
    </ligand>
</feature>
<feature type="binding site" evidence="1">
    <location>
        <position position="217"/>
    </location>
    <ligand>
        <name>Zn(2+)</name>
        <dbReference type="ChEBI" id="CHEBI:29105"/>
        <label>1</label>
    </ligand>
</feature>
<feature type="binding site" evidence="1">
    <location>
        <position position="248"/>
    </location>
    <ligand>
        <name>Zn(2+)</name>
        <dbReference type="ChEBI" id="CHEBI:29105"/>
        <label>1</label>
    </ligand>
</feature>
<feature type="binding site" evidence="1">
    <location>
        <position position="248"/>
    </location>
    <ligand>
        <name>Zn(2+)</name>
        <dbReference type="ChEBI" id="CHEBI:29105"/>
        <label>2</label>
    </ligand>
</feature>
<feature type="binding site" evidence="2">
    <location>
        <position position="286"/>
    </location>
    <ligand>
        <name>an N-acyl-1,2-diacyl-sn-glycero-3-phosphoethanolamine</name>
        <dbReference type="ChEBI" id="CHEBI:62537"/>
    </ligand>
</feature>
<feature type="binding site" evidence="1">
    <location>
        <position position="308"/>
    </location>
    <ligand>
        <name>Zn(2+)</name>
        <dbReference type="ChEBI" id="CHEBI:29105"/>
        <label>2</label>
    </ligand>
</feature>
<name>NAPE1_CAEEL</name>